<feature type="signal peptide" evidence="2">
    <location>
        <begin position="1"/>
        <end position="22"/>
    </location>
</feature>
<feature type="propeptide" id="PRO_0000401761" evidence="1">
    <location>
        <begin position="23"/>
        <end position="26"/>
    </location>
</feature>
<feature type="chain" id="PRO_0000401762" description="U7-lycotoxin-Ls1b">
    <location>
        <begin position="27"/>
        <end position="76"/>
    </location>
</feature>
<comment type="subcellular location">
    <subcellularLocation>
        <location evidence="1">Secreted</location>
    </subcellularLocation>
</comment>
<comment type="tissue specificity">
    <text>Expressed by the venom gland.</text>
</comment>
<comment type="PTM">
    <text evidence="1">Contains 4 disulfide bonds.</text>
</comment>
<comment type="similarity">
    <text evidence="3">Belongs to the neurotoxin 19 (CSTX) family. 07 (U7-Lctx) subfamily.</text>
</comment>
<accession>B6DCX0</accession>
<protein>
    <recommendedName>
        <fullName>U7-lycotoxin-Ls1b</fullName>
    </recommendedName>
    <alternativeName>
        <fullName>Toxin-like structure LSTX-G10</fullName>
    </alternativeName>
</protein>
<evidence type="ECO:0000250" key="1"/>
<evidence type="ECO:0000255" key="2"/>
<evidence type="ECO:0000305" key="3"/>
<sequence>MKLISFTGLALLLIVSLIDVEAQNEGACIPHGSVCTTNHAGCCSKLSCDCYRRFEKGVEKGQICWCIETGVTFSKE</sequence>
<name>TX710_LYCSI</name>
<keyword id="KW-1015">Disulfide bond</keyword>
<keyword id="KW-0964">Secreted</keyword>
<keyword id="KW-0732">Signal</keyword>
<keyword id="KW-0800">Toxin</keyword>
<organism>
    <name type="scientific">Lycosa singoriensis</name>
    <name type="common">Wolf spider</name>
    <name type="synonym">Aranea singoriensis</name>
    <dbReference type="NCBI Taxonomy" id="434756"/>
    <lineage>
        <taxon>Eukaryota</taxon>
        <taxon>Metazoa</taxon>
        <taxon>Ecdysozoa</taxon>
        <taxon>Arthropoda</taxon>
        <taxon>Chelicerata</taxon>
        <taxon>Arachnida</taxon>
        <taxon>Araneae</taxon>
        <taxon>Araneomorphae</taxon>
        <taxon>Entelegynae</taxon>
        <taxon>Lycosoidea</taxon>
        <taxon>Lycosidae</taxon>
        <taxon>Lycosa</taxon>
    </lineage>
</organism>
<reference key="1">
    <citation type="journal article" date="2010" name="Zoology">
        <title>Transcriptome analysis of the venom glands of the Chinese wolf spider Lycosa singoriensis.</title>
        <authorList>
            <person name="Zhang Y."/>
            <person name="Chen J."/>
            <person name="Tang X."/>
            <person name="Wang F."/>
            <person name="Jiang L."/>
            <person name="Xiong X."/>
            <person name="Wang M."/>
            <person name="Rong M."/>
            <person name="Liu Z."/>
            <person name="Liang S."/>
        </authorList>
    </citation>
    <scope>NUCLEOTIDE SEQUENCE [LARGE SCALE MRNA]</scope>
    <source>
        <tissue>Venom gland</tissue>
    </source>
</reference>
<proteinExistence type="evidence at transcript level"/>
<dbReference type="EMBL" id="EU926054">
    <property type="protein sequence ID" value="ACI41386.1"/>
    <property type="molecule type" value="mRNA"/>
</dbReference>
<dbReference type="EMBL" id="FM864058">
    <property type="protein sequence ID" value="CAS03655.1"/>
    <property type="molecule type" value="mRNA"/>
</dbReference>
<dbReference type="SMR" id="B6DCX0"/>
<dbReference type="ArachnoServer" id="AS000993">
    <property type="toxin name" value="U7-lycotoxin-Ls1b"/>
</dbReference>
<dbReference type="GO" id="GO:0005576">
    <property type="term" value="C:extracellular region"/>
    <property type="evidence" value="ECO:0007669"/>
    <property type="project" value="UniProtKB-SubCell"/>
</dbReference>
<dbReference type="GO" id="GO:0090729">
    <property type="term" value="F:toxin activity"/>
    <property type="evidence" value="ECO:0007669"/>
    <property type="project" value="UniProtKB-KW"/>
</dbReference>
<dbReference type="InterPro" id="IPR019553">
    <property type="entry name" value="Spider_toxin_CSTX_knottin"/>
</dbReference>
<dbReference type="Pfam" id="PF10530">
    <property type="entry name" value="Toxin_35"/>
    <property type="match status" value="1"/>
</dbReference>